<keyword id="KW-0067">ATP-binding</keyword>
<keyword id="KW-0378">Hydrolase</keyword>
<keyword id="KW-0460">Magnesium</keyword>
<keyword id="KW-0479">Metal-binding</keyword>
<keyword id="KW-0511">Multifunctional enzyme</keyword>
<keyword id="KW-0533">Nickel</keyword>
<keyword id="KW-0547">Nucleotide-binding</keyword>
<keyword id="KW-0548">Nucleotidyltransferase</keyword>
<keyword id="KW-1185">Reference proteome</keyword>
<keyword id="KW-0692">RNA repair</keyword>
<keyword id="KW-0694">RNA-binding</keyword>
<keyword id="KW-0808">Transferase</keyword>
<keyword id="KW-0819">tRNA processing</keyword>
<organism>
    <name type="scientific">Aliivibrio fischeri (strain ATCC 700601 / ES114)</name>
    <name type="common">Vibrio fischeri</name>
    <dbReference type="NCBI Taxonomy" id="312309"/>
    <lineage>
        <taxon>Bacteria</taxon>
        <taxon>Pseudomonadati</taxon>
        <taxon>Pseudomonadota</taxon>
        <taxon>Gammaproteobacteria</taxon>
        <taxon>Vibrionales</taxon>
        <taxon>Vibrionaceae</taxon>
        <taxon>Aliivibrio</taxon>
    </lineage>
</organism>
<feature type="chain" id="PRO_0000139003" description="Multifunctional CCA protein">
    <location>
        <begin position="1"/>
        <end position="407"/>
    </location>
</feature>
<feature type="domain" description="HD" evidence="1">
    <location>
        <begin position="228"/>
        <end position="329"/>
    </location>
</feature>
<feature type="binding site" evidence="1">
    <location>
        <position position="8"/>
    </location>
    <ligand>
        <name>ATP</name>
        <dbReference type="ChEBI" id="CHEBI:30616"/>
    </ligand>
</feature>
<feature type="binding site" evidence="1">
    <location>
        <position position="8"/>
    </location>
    <ligand>
        <name>CTP</name>
        <dbReference type="ChEBI" id="CHEBI:37563"/>
    </ligand>
</feature>
<feature type="binding site" evidence="1">
    <location>
        <position position="11"/>
    </location>
    <ligand>
        <name>ATP</name>
        <dbReference type="ChEBI" id="CHEBI:30616"/>
    </ligand>
</feature>
<feature type="binding site" evidence="1">
    <location>
        <position position="11"/>
    </location>
    <ligand>
        <name>CTP</name>
        <dbReference type="ChEBI" id="CHEBI:37563"/>
    </ligand>
</feature>
<feature type="binding site" evidence="1">
    <location>
        <position position="21"/>
    </location>
    <ligand>
        <name>Mg(2+)</name>
        <dbReference type="ChEBI" id="CHEBI:18420"/>
    </ligand>
</feature>
<feature type="binding site" evidence="1">
    <location>
        <position position="23"/>
    </location>
    <ligand>
        <name>Mg(2+)</name>
        <dbReference type="ChEBI" id="CHEBI:18420"/>
    </ligand>
</feature>
<feature type="binding site" evidence="1">
    <location>
        <position position="91"/>
    </location>
    <ligand>
        <name>ATP</name>
        <dbReference type="ChEBI" id="CHEBI:30616"/>
    </ligand>
</feature>
<feature type="binding site" evidence="1">
    <location>
        <position position="91"/>
    </location>
    <ligand>
        <name>CTP</name>
        <dbReference type="ChEBI" id="CHEBI:37563"/>
    </ligand>
</feature>
<feature type="binding site" evidence="1">
    <location>
        <position position="137"/>
    </location>
    <ligand>
        <name>ATP</name>
        <dbReference type="ChEBI" id="CHEBI:30616"/>
    </ligand>
</feature>
<feature type="binding site" evidence="1">
    <location>
        <position position="137"/>
    </location>
    <ligand>
        <name>CTP</name>
        <dbReference type="ChEBI" id="CHEBI:37563"/>
    </ligand>
</feature>
<feature type="binding site" evidence="1">
    <location>
        <position position="140"/>
    </location>
    <ligand>
        <name>ATP</name>
        <dbReference type="ChEBI" id="CHEBI:30616"/>
    </ligand>
</feature>
<feature type="binding site" evidence="1">
    <location>
        <position position="140"/>
    </location>
    <ligand>
        <name>CTP</name>
        <dbReference type="ChEBI" id="CHEBI:37563"/>
    </ligand>
</feature>
<dbReference type="EC" id="2.7.7.72" evidence="1"/>
<dbReference type="EC" id="3.1.3.-" evidence="1"/>
<dbReference type="EC" id="3.1.4.-" evidence="1"/>
<dbReference type="EMBL" id="CP000020">
    <property type="protein sequence ID" value="AAW86739.1"/>
    <property type="molecule type" value="Genomic_DNA"/>
</dbReference>
<dbReference type="RefSeq" id="WP_011262663.1">
    <property type="nucleotide sequence ID" value="NC_006840.2"/>
</dbReference>
<dbReference type="RefSeq" id="YP_205627.1">
    <property type="nucleotide sequence ID" value="NC_006840.2"/>
</dbReference>
<dbReference type="SMR" id="Q5E2K7"/>
<dbReference type="STRING" id="312309.VF_2244"/>
<dbReference type="EnsemblBacteria" id="AAW86739">
    <property type="protein sequence ID" value="AAW86739"/>
    <property type="gene ID" value="VF_2244"/>
</dbReference>
<dbReference type="GeneID" id="54164960"/>
<dbReference type="KEGG" id="vfi:VF_2244"/>
<dbReference type="PATRIC" id="fig|312309.11.peg.2282"/>
<dbReference type="eggNOG" id="COG0617">
    <property type="taxonomic scope" value="Bacteria"/>
</dbReference>
<dbReference type="HOGENOM" id="CLU_015961_1_1_6"/>
<dbReference type="OrthoDB" id="9805698at2"/>
<dbReference type="Proteomes" id="UP000000537">
    <property type="component" value="Chromosome I"/>
</dbReference>
<dbReference type="GO" id="GO:0005524">
    <property type="term" value="F:ATP binding"/>
    <property type="evidence" value="ECO:0007669"/>
    <property type="project" value="UniProtKB-UniRule"/>
</dbReference>
<dbReference type="GO" id="GO:0004810">
    <property type="term" value="F:CCA tRNA nucleotidyltransferase activity"/>
    <property type="evidence" value="ECO:0007669"/>
    <property type="project" value="UniProtKB-UniRule"/>
</dbReference>
<dbReference type="GO" id="GO:0004112">
    <property type="term" value="F:cyclic-nucleotide phosphodiesterase activity"/>
    <property type="evidence" value="ECO:0007669"/>
    <property type="project" value="UniProtKB-UniRule"/>
</dbReference>
<dbReference type="GO" id="GO:0000287">
    <property type="term" value="F:magnesium ion binding"/>
    <property type="evidence" value="ECO:0007669"/>
    <property type="project" value="UniProtKB-UniRule"/>
</dbReference>
<dbReference type="GO" id="GO:0016791">
    <property type="term" value="F:phosphatase activity"/>
    <property type="evidence" value="ECO:0007669"/>
    <property type="project" value="UniProtKB-UniRule"/>
</dbReference>
<dbReference type="GO" id="GO:0000049">
    <property type="term" value="F:tRNA binding"/>
    <property type="evidence" value="ECO:0007669"/>
    <property type="project" value="UniProtKB-UniRule"/>
</dbReference>
<dbReference type="GO" id="GO:0042245">
    <property type="term" value="P:RNA repair"/>
    <property type="evidence" value="ECO:0007669"/>
    <property type="project" value="UniProtKB-KW"/>
</dbReference>
<dbReference type="GO" id="GO:0001680">
    <property type="term" value="P:tRNA 3'-terminal CCA addition"/>
    <property type="evidence" value="ECO:0007669"/>
    <property type="project" value="UniProtKB-UniRule"/>
</dbReference>
<dbReference type="CDD" id="cd00077">
    <property type="entry name" value="HDc"/>
    <property type="match status" value="1"/>
</dbReference>
<dbReference type="CDD" id="cd05398">
    <property type="entry name" value="NT_ClassII-CCAase"/>
    <property type="match status" value="1"/>
</dbReference>
<dbReference type="FunFam" id="1.10.3090.10:FF:000001">
    <property type="entry name" value="Multifunctional CCA protein"/>
    <property type="match status" value="1"/>
</dbReference>
<dbReference type="Gene3D" id="3.30.460.10">
    <property type="entry name" value="Beta Polymerase, domain 2"/>
    <property type="match status" value="1"/>
</dbReference>
<dbReference type="Gene3D" id="1.10.3090.10">
    <property type="entry name" value="cca-adding enzyme, domain 2"/>
    <property type="match status" value="1"/>
</dbReference>
<dbReference type="HAMAP" id="MF_01261">
    <property type="entry name" value="CCA_bact_type1"/>
    <property type="match status" value="1"/>
</dbReference>
<dbReference type="HAMAP" id="MF_01262">
    <property type="entry name" value="CCA_bact_type2"/>
    <property type="match status" value="1"/>
</dbReference>
<dbReference type="InterPro" id="IPR012006">
    <property type="entry name" value="CCA_bact"/>
</dbReference>
<dbReference type="InterPro" id="IPR003607">
    <property type="entry name" value="HD/PDEase_dom"/>
</dbReference>
<dbReference type="InterPro" id="IPR006674">
    <property type="entry name" value="HD_domain"/>
</dbReference>
<dbReference type="InterPro" id="IPR043519">
    <property type="entry name" value="NT_sf"/>
</dbReference>
<dbReference type="InterPro" id="IPR002646">
    <property type="entry name" value="PolA_pol_head_dom"/>
</dbReference>
<dbReference type="InterPro" id="IPR032828">
    <property type="entry name" value="PolyA_RNA-bd"/>
</dbReference>
<dbReference type="InterPro" id="IPR050124">
    <property type="entry name" value="tRNA_CCA-adding_enzyme"/>
</dbReference>
<dbReference type="NCBIfam" id="NF008137">
    <property type="entry name" value="PRK10885.1"/>
    <property type="match status" value="1"/>
</dbReference>
<dbReference type="PANTHER" id="PTHR47545">
    <property type="entry name" value="MULTIFUNCTIONAL CCA PROTEIN"/>
    <property type="match status" value="1"/>
</dbReference>
<dbReference type="PANTHER" id="PTHR47545:SF1">
    <property type="entry name" value="MULTIFUNCTIONAL CCA PROTEIN"/>
    <property type="match status" value="1"/>
</dbReference>
<dbReference type="Pfam" id="PF01966">
    <property type="entry name" value="HD"/>
    <property type="match status" value="1"/>
</dbReference>
<dbReference type="Pfam" id="PF01743">
    <property type="entry name" value="PolyA_pol"/>
    <property type="match status" value="1"/>
</dbReference>
<dbReference type="Pfam" id="PF12627">
    <property type="entry name" value="PolyA_pol_RNAbd"/>
    <property type="match status" value="1"/>
</dbReference>
<dbReference type="PIRSF" id="PIRSF000813">
    <property type="entry name" value="CCA_bact"/>
    <property type="match status" value="1"/>
</dbReference>
<dbReference type="SUPFAM" id="SSF81301">
    <property type="entry name" value="Nucleotidyltransferase"/>
    <property type="match status" value="1"/>
</dbReference>
<dbReference type="SUPFAM" id="SSF81891">
    <property type="entry name" value="Poly A polymerase C-terminal region-like"/>
    <property type="match status" value="1"/>
</dbReference>
<dbReference type="PROSITE" id="PS51831">
    <property type="entry name" value="HD"/>
    <property type="match status" value="1"/>
</dbReference>
<accession>Q5E2K7</accession>
<gene>
    <name evidence="1" type="primary">cca</name>
    <name type="ordered locus">VF_2244</name>
</gene>
<name>CCA_ALIF1</name>
<proteinExistence type="inferred from homology"/>
<evidence type="ECO:0000255" key="1">
    <source>
        <dbReference type="HAMAP-Rule" id="MF_01261"/>
    </source>
</evidence>
<sequence>MKIYLVGGAVRDSLLNIDVKDKDWVVVGSTPQKMDSLGYQTVGQDFPVFLNPKTKEEYALARTERKSGQGYKGFTCYAEPDVTLEEDLLRRDLTINAIAQADNGELIDPYNGQQDIIDRTLRHVSDAFTEDPLRVLRVARFAARFHHLGFTVAPETMHLMKVLVDSGELSHLTAERVWQEWQKSLSSQHPEIFLSTLKECGALAIVLPELNALFGIPQPEKWHPEIDTGIHTLMVAQQAALLSQDLPTRFAAQVHDLGKGVTPESEWPSHKLHCHTGIKLIKRLCDRVRVPNDYRDLALLVCEHHSNIHRAAELRAQTFIKIFDKMDVWRKPERLAPILLCCQADHAGRLGLETQPYPQKKRFEAAFDAAKNVEVKDVVAAGFKGPEIREELSKRRIEAVKDKLNIK</sequence>
<comment type="function">
    <text evidence="1">Catalyzes the addition and repair of the essential 3'-terminal CCA sequence in tRNAs without using a nucleic acid template. Adds these three nucleotides in the order of C, C, and A to the tRNA nucleotide-73, using CTP and ATP as substrates and producing inorganic pyrophosphate. tRNA 3'-terminal CCA addition is required both for tRNA processing and repair. Also involved in tRNA surveillance by mediating tandem CCA addition to generate a CCACCA at the 3' terminus of unstable tRNAs. While stable tRNAs receive only 3'-terminal CCA, unstable tRNAs are marked with CCACCA and rapidly degraded.</text>
</comment>
<comment type="catalytic activity">
    <reaction evidence="1">
        <text>a tRNA precursor + 2 CTP + ATP = a tRNA with a 3' CCA end + 3 diphosphate</text>
        <dbReference type="Rhea" id="RHEA:14433"/>
        <dbReference type="Rhea" id="RHEA-COMP:10465"/>
        <dbReference type="Rhea" id="RHEA-COMP:10468"/>
        <dbReference type="ChEBI" id="CHEBI:30616"/>
        <dbReference type="ChEBI" id="CHEBI:33019"/>
        <dbReference type="ChEBI" id="CHEBI:37563"/>
        <dbReference type="ChEBI" id="CHEBI:74896"/>
        <dbReference type="ChEBI" id="CHEBI:83071"/>
        <dbReference type="EC" id="2.7.7.72"/>
    </reaction>
</comment>
<comment type="catalytic activity">
    <reaction evidence="1">
        <text>a tRNA with a 3' CCA end + 2 CTP + ATP = a tRNA with a 3' CCACCA end + 3 diphosphate</text>
        <dbReference type="Rhea" id="RHEA:76235"/>
        <dbReference type="Rhea" id="RHEA-COMP:10468"/>
        <dbReference type="Rhea" id="RHEA-COMP:18655"/>
        <dbReference type="ChEBI" id="CHEBI:30616"/>
        <dbReference type="ChEBI" id="CHEBI:33019"/>
        <dbReference type="ChEBI" id="CHEBI:37563"/>
        <dbReference type="ChEBI" id="CHEBI:83071"/>
        <dbReference type="ChEBI" id="CHEBI:195187"/>
    </reaction>
    <physiologicalReaction direction="left-to-right" evidence="1">
        <dbReference type="Rhea" id="RHEA:76236"/>
    </physiologicalReaction>
</comment>
<comment type="cofactor">
    <cofactor evidence="1">
        <name>Mg(2+)</name>
        <dbReference type="ChEBI" id="CHEBI:18420"/>
    </cofactor>
    <text evidence="1">Magnesium is required for nucleotidyltransferase activity.</text>
</comment>
<comment type="cofactor">
    <cofactor evidence="1">
        <name>Ni(2+)</name>
        <dbReference type="ChEBI" id="CHEBI:49786"/>
    </cofactor>
    <text evidence="1">Nickel for phosphatase activity.</text>
</comment>
<comment type="subunit">
    <text evidence="1">Monomer. Can also form homodimers and oligomers.</text>
</comment>
<comment type="domain">
    <text evidence="1">Comprises two domains: an N-terminal domain containing the nucleotidyltransferase activity and a C-terminal HD domain associated with both phosphodiesterase and phosphatase activities.</text>
</comment>
<comment type="miscellaneous">
    <text evidence="1">A single active site specifically recognizes both ATP and CTP and is responsible for their addition.</text>
</comment>
<comment type="similarity">
    <text evidence="1">Belongs to the tRNA nucleotidyltransferase/poly(A) polymerase family. Bacterial CCA-adding enzyme type 1 subfamily.</text>
</comment>
<reference key="1">
    <citation type="journal article" date="2005" name="Proc. Natl. Acad. Sci. U.S.A.">
        <title>Complete genome sequence of Vibrio fischeri: a symbiotic bacterium with pathogenic congeners.</title>
        <authorList>
            <person name="Ruby E.G."/>
            <person name="Urbanowski M."/>
            <person name="Campbell J."/>
            <person name="Dunn A."/>
            <person name="Faini M."/>
            <person name="Gunsalus R."/>
            <person name="Lostroh P."/>
            <person name="Lupp C."/>
            <person name="McCann J."/>
            <person name="Millikan D."/>
            <person name="Schaefer A."/>
            <person name="Stabb E."/>
            <person name="Stevens A."/>
            <person name="Visick K."/>
            <person name="Whistler C."/>
            <person name="Greenberg E.P."/>
        </authorList>
    </citation>
    <scope>NUCLEOTIDE SEQUENCE [LARGE SCALE GENOMIC DNA]</scope>
    <source>
        <strain>ATCC 700601 / ES114</strain>
    </source>
</reference>
<protein>
    <recommendedName>
        <fullName evidence="1">Multifunctional CCA protein</fullName>
    </recommendedName>
    <domain>
        <recommendedName>
            <fullName evidence="1">CCA-adding enzyme</fullName>
            <ecNumber evidence="1">2.7.7.72</ecNumber>
        </recommendedName>
        <alternativeName>
            <fullName evidence="1">CCA tRNA nucleotidyltransferase</fullName>
        </alternativeName>
        <alternativeName>
            <fullName evidence="1">tRNA CCA-pyrophosphorylase</fullName>
        </alternativeName>
        <alternativeName>
            <fullName evidence="1">tRNA adenylyl-/cytidylyl-transferase</fullName>
        </alternativeName>
        <alternativeName>
            <fullName evidence="1">tRNA nucleotidyltransferase</fullName>
        </alternativeName>
        <alternativeName>
            <fullName evidence="1">tRNA-NT</fullName>
        </alternativeName>
    </domain>
    <domain>
        <recommendedName>
            <fullName evidence="1">2'-nucleotidase</fullName>
            <ecNumber evidence="1">3.1.3.-</ecNumber>
        </recommendedName>
    </domain>
    <domain>
        <recommendedName>
            <fullName evidence="1">2',3'-cyclic phosphodiesterase</fullName>
            <ecNumber evidence="1">3.1.4.-</ecNumber>
        </recommendedName>
    </domain>
    <domain>
        <recommendedName>
            <fullName evidence="1">Phosphatase</fullName>
            <ecNumber evidence="1">3.1.3.-</ecNumber>
        </recommendedName>
    </domain>
</protein>